<evidence type="ECO:0000250" key="1"/>
<evidence type="ECO:0000250" key="2">
    <source>
        <dbReference type="UniProtKB" id="P05759"/>
    </source>
</evidence>
<evidence type="ECO:0000255" key="3">
    <source>
        <dbReference type="PROSITE-ProRule" id="PRU00214"/>
    </source>
</evidence>
<evidence type="ECO:0000269" key="4">
    <source>
    </source>
</evidence>
<evidence type="ECO:0000305" key="5"/>
<sequence>MQIFVKTLTGKTITLEVESSDTIDNVKSKIQDKEGIPPDQQRLIFAGKQLEDGRTLSDYNIQKESTLHLVLRLRGGGKKRKKKTYTTPKKIKHKHKKVELAVLKYYKVEDDGSVKRLRRECPNCGASTFMANHKDRLYCGRCHLTLKLEA</sequence>
<accession>P0C8R3</accession>
<accession>O13697</accession>
<accession>O14257</accession>
<accession>P0C014</accession>
<accession>Q76PD0</accession>
<accession>Q9HDZ4</accession>
<name>RS27B_SCHPO</name>
<reference key="1">
    <citation type="journal article" date="2002" name="Nature">
        <title>The genome sequence of Schizosaccharomyces pombe.</title>
        <authorList>
            <person name="Wood V."/>
            <person name="Gwilliam R."/>
            <person name="Rajandream M.A."/>
            <person name="Lyne M.H."/>
            <person name="Lyne R."/>
            <person name="Stewart A."/>
            <person name="Sgouros J.G."/>
            <person name="Peat N."/>
            <person name="Hayles J."/>
            <person name="Baker S.G."/>
            <person name="Basham D."/>
            <person name="Bowman S."/>
            <person name="Brooks K."/>
            <person name="Brown D."/>
            <person name="Brown S."/>
            <person name="Chillingworth T."/>
            <person name="Churcher C.M."/>
            <person name="Collins M."/>
            <person name="Connor R."/>
            <person name="Cronin A."/>
            <person name="Davis P."/>
            <person name="Feltwell T."/>
            <person name="Fraser A."/>
            <person name="Gentles S."/>
            <person name="Goble A."/>
            <person name="Hamlin N."/>
            <person name="Harris D.E."/>
            <person name="Hidalgo J."/>
            <person name="Hodgson G."/>
            <person name="Holroyd S."/>
            <person name="Hornsby T."/>
            <person name="Howarth S."/>
            <person name="Huckle E.J."/>
            <person name="Hunt S."/>
            <person name="Jagels K."/>
            <person name="James K.D."/>
            <person name="Jones L."/>
            <person name="Jones M."/>
            <person name="Leather S."/>
            <person name="McDonald S."/>
            <person name="McLean J."/>
            <person name="Mooney P."/>
            <person name="Moule S."/>
            <person name="Mungall K.L."/>
            <person name="Murphy L.D."/>
            <person name="Niblett D."/>
            <person name="Odell C."/>
            <person name="Oliver K."/>
            <person name="O'Neil S."/>
            <person name="Pearson D."/>
            <person name="Quail M.A."/>
            <person name="Rabbinowitsch E."/>
            <person name="Rutherford K.M."/>
            <person name="Rutter S."/>
            <person name="Saunders D."/>
            <person name="Seeger K."/>
            <person name="Sharp S."/>
            <person name="Skelton J."/>
            <person name="Simmonds M.N."/>
            <person name="Squares R."/>
            <person name="Squares S."/>
            <person name="Stevens K."/>
            <person name="Taylor K."/>
            <person name="Taylor R.G."/>
            <person name="Tivey A."/>
            <person name="Walsh S.V."/>
            <person name="Warren T."/>
            <person name="Whitehead S."/>
            <person name="Woodward J.R."/>
            <person name="Volckaert G."/>
            <person name="Aert R."/>
            <person name="Robben J."/>
            <person name="Grymonprez B."/>
            <person name="Weltjens I."/>
            <person name="Vanstreels E."/>
            <person name="Rieger M."/>
            <person name="Schaefer M."/>
            <person name="Mueller-Auer S."/>
            <person name="Gabel C."/>
            <person name="Fuchs M."/>
            <person name="Duesterhoeft A."/>
            <person name="Fritzc C."/>
            <person name="Holzer E."/>
            <person name="Moestl D."/>
            <person name="Hilbert H."/>
            <person name="Borzym K."/>
            <person name="Langer I."/>
            <person name="Beck A."/>
            <person name="Lehrach H."/>
            <person name="Reinhardt R."/>
            <person name="Pohl T.M."/>
            <person name="Eger P."/>
            <person name="Zimmermann W."/>
            <person name="Wedler H."/>
            <person name="Wambutt R."/>
            <person name="Purnelle B."/>
            <person name="Goffeau A."/>
            <person name="Cadieu E."/>
            <person name="Dreano S."/>
            <person name="Gloux S."/>
            <person name="Lelaure V."/>
            <person name="Mottier S."/>
            <person name="Galibert F."/>
            <person name="Aves S.J."/>
            <person name="Xiang Z."/>
            <person name="Hunt C."/>
            <person name="Moore K."/>
            <person name="Hurst S.M."/>
            <person name="Lucas M."/>
            <person name="Rochet M."/>
            <person name="Gaillardin C."/>
            <person name="Tallada V.A."/>
            <person name="Garzon A."/>
            <person name="Thode G."/>
            <person name="Daga R.R."/>
            <person name="Cruzado L."/>
            <person name="Jimenez J."/>
            <person name="Sanchez M."/>
            <person name="del Rey F."/>
            <person name="Benito J."/>
            <person name="Dominguez A."/>
            <person name="Revuelta J.L."/>
            <person name="Moreno S."/>
            <person name="Armstrong J."/>
            <person name="Forsburg S.L."/>
            <person name="Cerutti L."/>
            <person name="Lowe T."/>
            <person name="McCombie W.R."/>
            <person name="Paulsen I."/>
            <person name="Potashkin J."/>
            <person name="Shpakovski G.V."/>
            <person name="Ussery D."/>
            <person name="Barrell B.G."/>
            <person name="Nurse P."/>
        </authorList>
    </citation>
    <scope>NUCLEOTIDE SEQUENCE [LARGE SCALE GENOMIC DNA]</scope>
    <source>
        <strain>972 / ATCC 24843</strain>
    </source>
</reference>
<reference key="2">
    <citation type="journal article" date="2006" name="Nat. Biotechnol.">
        <title>ORFeome cloning and global analysis of protein localization in the fission yeast Schizosaccharomyces pombe.</title>
        <authorList>
            <person name="Matsuyama A."/>
            <person name="Arai R."/>
            <person name="Yashiroda Y."/>
            <person name="Shirai A."/>
            <person name="Kamata A."/>
            <person name="Sekido S."/>
            <person name="Kobayashi Y."/>
            <person name="Hashimoto A."/>
            <person name="Hamamoto M."/>
            <person name="Hiraoka Y."/>
            <person name="Horinouchi S."/>
            <person name="Yoshida M."/>
        </authorList>
    </citation>
    <scope>SUBCELLULAR LOCATION [LARGE SCALE ANALYSIS]</scope>
</reference>
<comment type="function">
    <molecule>Ubiquitin</molecule>
    <text evidence="1">Exists either covalently attached to another protein, or free (unanchored). When covalently bound, it is conjugated to target proteins via an isopeptide bond either as a monomer (monoubiquitin), a polymer linked via different Lys residues of the ubiquitin (polyubiquitin chains) or a linear polymer linked via the initiator Met of the ubiquitin (linear polyubiquitin chains). Polyubiquitin chains, when attached to a target protein, have different functions depending on the Lys residue of the ubiquitin that is linked: Lys-6-linked may be involved in DNA repair; Lys-11-linked is involved in ERAD (endoplasmic reticulum-associated degradation) and in cell-cycle regulation; Lys-29-linked is involved in lysosomal degradation; Lys-33-linked is involved in kinase modification; Lys-48-linked is involved in protein degradation via the proteasome; Lys-63-linked is involved in endocytosis, and DNA-damage responses. Linear polymer chains formed via attachment by the initiator Met lead to cell signaling. Ubiquitin is usually conjugated to Lys residues of target proteins, however, in rare cases, conjugation to Cys or Ser residues has been observed. When polyubiquitin is free (unanchored-polyubiquitin), it also has distinct roles, such as in activation of protein kinases, and in signaling (By similarity).</text>
</comment>
<comment type="function">
    <molecule>Small ribosomal subunit protein eS31B</molecule>
    <text evidence="2">Component of the ribosome, a large ribonucleoprotein complex responsible for the synthesis of proteins in the cell. The small ribosomal subunit (SSU) binds messenger RNAs (mRNAs) and translates the encoded message by selecting cognate aminoacyl-transfer RNA (tRNA) molecules. The large subunit (LSU) contains the ribosomal catalytic site termed the peptidyl transferase center (PTC), which catalyzes the formation of peptide bonds, thereby polymerizing the amino acids delivered by tRNAs into a polypeptide chain. The nascent polypeptides leave the ribosome through a tunnel in the LSU and interact with protein factors that function in enzymatic processing, targeting, and the membrane insertion of nascent chains at the exit of the ribosomal tunnel.</text>
</comment>
<comment type="subunit">
    <molecule>Small ribosomal subunit protein eS31B</molecule>
    <text evidence="2">Component of the small ribosomal subunit (SSU). Mature yeast ribosomes consist of a small (40S) and a large (60S) subunit. The 40S small subunit contains 1 molecule of ribosomal RNA (18S rRNA) and at least 33 different proteins. The large 60S subunit contains 3 rRNA molecules (25S, 5.8S and 5S rRNA) and at least 46 different proteins.</text>
</comment>
<comment type="subcellular location">
    <molecule>Ubiquitin</molecule>
    <subcellularLocation>
        <location evidence="1">Cytoplasm</location>
    </subcellularLocation>
    <subcellularLocation>
        <location evidence="1">Nucleus</location>
    </subcellularLocation>
</comment>
<comment type="subcellular location">
    <molecule>Small ribosomal subunit protein eS31B</molecule>
    <subcellularLocation>
        <location evidence="2">Cytoplasm</location>
    </subcellularLocation>
    <subcellularLocation>
        <location evidence="4">Nucleus</location>
        <location evidence="4">Nucleolus</location>
    </subcellularLocation>
</comment>
<comment type="miscellaneous">
    <text evidence="5">Ubiquitin is encoded by 5 different genes. Ubi1 and ubi2 are synthesized as a polyprotein with one copy of ubiquitin fused to ribosomal proteins eL40A and eL40B, respectively. Ubi3 and ubi5 are polyproteins with one copy of ubiquitin fused to ribosomal proteins eS31A and eS31B, respectively. Ubi4 is a polyprotein containing 5 exact head to tail repeats of ubiquitin.</text>
</comment>
<comment type="miscellaneous">
    <text>There are 2 genes for eS31 in S.pombe.</text>
</comment>
<comment type="similarity">
    <text evidence="5">In the N-terminal section; belongs to the ubiquitin family.</text>
</comment>
<comment type="similarity">
    <text evidence="5">In the C-terminal section; belongs to the eukaryotic ribosomal protein eS31 family.</text>
</comment>
<proteinExistence type="evidence at protein level"/>
<protein>
    <recommendedName>
        <fullName evidence="5">Ubiquitin-ribosomal protein eS31B fusion protein</fullName>
    </recommendedName>
    <component>
        <recommendedName>
            <fullName>Ubiquitin</fullName>
        </recommendedName>
    </component>
    <component>
        <recommendedName>
            <fullName evidence="5">Small ribosomal subunit protein eS31B</fullName>
        </recommendedName>
        <alternativeName>
            <fullName>40S ribosomal protein S27b</fullName>
        </alternativeName>
    </component>
</protein>
<organism>
    <name type="scientific">Schizosaccharomyces pombe (strain 972 / ATCC 24843)</name>
    <name type="common">Fission yeast</name>
    <dbReference type="NCBI Taxonomy" id="284812"/>
    <lineage>
        <taxon>Eukaryota</taxon>
        <taxon>Fungi</taxon>
        <taxon>Dikarya</taxon>
        <taxon>Ascomycota</taxon>
        <taxon>Taphrinomycotina</taxon>
        <taxon>Schizosaccharomycetes</taxon>
        <taxon>Schizosaccharomycetales</taxon>
        <taxon>Schizosaccharomycetaceae</taxon>
        <taxon>Schizosaccharomyces</taxon>
    </lineage>
</organism>
<feature type="chain" id="PRO_0000396488" description="Ubiquitin">
    <location>
        <begin position="1"/>
        <end position="76"/>
    </location>
</feature>
<feature type="chain" id="PRO_0000363372" description="Small ribosomal subunit protein eS31B">
    <location>
        <begin position="77"/>
        <end position="150"/>
    </location>
</feature>
<feature type="domain" description="Ubiquitin-like" evidence="3">
    <location>
        <begin position="1"/>
        <end position="76"/>
    </location>
</feature>
<feature type="zinc finger region" description="C4-type" evidence="1">
    <location>
        <begin position="121"/>
        <end position="142"/>
    </location>
</feature>
<feature type="cross-link" description="Glycyl lysine isopeptide (Lys-Gly) (interchain with G-Cter in ubiquitin)">
    <location>
        <position position="6"/>
    </location>
</feature>
<feature type="cross-link" description="Glycyl lysine isopeptide (Lys-Gly) (interchain with G-Cter in ubiquitin)">
    <location>
        <position position="11"/>
    </location>
</feature>
<feature type="cross-link" description="Glycyl lysine isopeptide (Lys-Gly) (interchain with G-Cter in ubiquitin)">
    <location>
        <position position="27"/>
    </location>
</feature>
<feature type="cross-link" description="Glycyl lysine isopeptide (Lys-Gly) (interchain with G-Cter in ubiquitin)" evidence="1">
    <location>
        <position position="29"/>
    </location>
</feature>
<feature type="cross-link" description="Glycyl lysine isopeptide (Lys-Gly) (interchain with G-Cter in ubiquitin)">
    <location>
        <position position="33"/>
    </location>
</feature>
<feature type="cross-link" description="Glycyl lysine isopeptide (Lys-Gly) (interchain with G-Cter in ubiquitin)" evidence="1">
    <location>
        <position position="48"/>
    </location>
</feature>
<feature type="cross-link" description="Glycyl lysine isopeptide (Lys-Gly) (interchain with G-Cter in ubiquitin)" evidence="1">
    <location>
        <position position="63"/>
    </location>
</feature>
<feature type="cross-link" description="Glycyl lysine isopeptide (Gly-Lys) (interchain with K-? in acceptor proteins)" evidence="3">
    <location>
        <position position="76"/>
    </location>
</feature>
<keyword id="KW-0963">Cytoplasm</keyword>
<keyword id="KW-1017">Isopeptide bond</keyword>
<keyword id="KW-0479">Metal-binding</keyword>
<keyword id="KW-0539">Nucleus</keyword>
<keyword id="KW-1185">Reference proteome</keyword>
<keyword id="KW-0687">Ribonucleoprotein</keyword>
<keyword id="KW-0689">Ribosomal protein</keyword>
<keyword id="KW-0832">Ubl conjugation</keyword>
<keyword id="KW-0862">Zinc</keyword>
<keyword id="KW-0863">Zinc-finger</keyword>
<gene>
    <name type="primary">ubi5</name>
    <name type="ORF">SPAC589.10c</name>
</gene>
<dbReference type="EMBL" id="CU329670">
    <property type="protein sequence ID" value="CAC19767.1"/>
    <property type="molecule type" value="Genomic_DNA"/>
</dbReference>
<dbReference type="RefSeq" id="NP_594058.1">
    <property type="nucleotide sequence ID" value="NM_001019482.2"/>
</dbReference>
<dbReference type="BMRB" id="P0C8R3"/>
<dbReference type="SMR" id="P0C8R3"/>
<dbReference type="BioGRID" id="278614">
    <property type="interactions" value="9"/>
</dbReference>
<dbReference type="FunCoup" id="P0C8R3">
    <property type="interactions" value="710"/>
</dbReference>
<dbReference type="STRING" id="284812.P0C8R3"/>
<dbReference type="iPTMnet" id="P0C8R3"/>
<dbReference type="PaxDb" id="4896-SPAC589.10c.1"/>
<dbReference type="EnsemblFungi" id="SPAC589.10c.1">
    <property type="protein sequence ID" value="SPAC589.10c.1:pep"/>
    <property type="gene ID" value="SPAC589.10c"/>
</dbReference>
<dbReference type="GeneID" id="2542138"/>
<dbReference type="KEGG" id="spo:2542138"/>
<dbReference type="PomBase" id="SPAC589.10c">
    <property type="gene designation" value="ubi5"/>
</dbReference>
<dbReference type="VEuPathDB" id="FungiDB:SPAC589.10c"/>
<dbReference type="eggNOG" id="KOG0004">
    <property type="taxonomic scope" value="Eukaryota"/>
</dbReference>
<dbReference type="HOGENOM" id="CLU_010412_2_0_1"/>
<dbReference type="InParanoid" id="P0C8R3"/>
<dbReference type="OMA" id="GVFMAFH"/>
<dbReference type="Reactome" id="R-SPO-156827">
    <property type="pathway name" value="L13a-mediated translational silencing of Ceruloplasmin expression"/>
</dbReference>
<dbReference type="Reactome" id="R-SPO-1799339">
    <property type="pathway name" value="SRP-dependent cotranslational protein targeting to membrane"/>
</dbReference>
<dbReference type="Reactome" id="R-SPO-72649">
    <property type="pathway name" value="Translation initiation complex formation"/>
</dbReference>
<dbReference type="Reactome" id="R-SPO-72689">
    <property type="pathway name" value="Formation of a pool of free 40S subunits"/>
</dbReference>
<dbReference type="Reactome" id="R-SPO-72695">
    <property type="pathway name" value="Formation of the ternary complex, and subsequently, the 43S complex"/>
</dbReference>
<dbReference type="Reactome" id="R-SPO-72702">
    <property type="pathway name" value="Ribosomal scanning and start codon recognition"/>
</dbReference>
<dbReference type="Reactome" id="R-SPO-72706">
    <property type="pathway name" value="GTP hydrolysis and joining of the 60S ribosomal subunit"/>
</dbReference>
<dbReference type="Reactome" id="R-SPO-975956">
    <property type="pathway name" value="Nonsense Mediated Decay (NMD) independent of the Exon Junction Complex (EJC)"/>
</dbReference>
<dbReference type="Reactome" id="R-SPO-975957">
    <property type="pathway name" value="Nonsense Mediated Decay (NMD) enhanced by the Exon Junction Complex (EJC)"/>
</dbReference>
<dbReference type="PRO" id="PR:P0C8R3"/>
<dbReference type="Proteomes" id="UP000002485">
    <property type="component" value="Chromosome I"/>
</dbReference>
<dbReference type="GO" id="GO:0005737">
    <property type="term" value="C:cytoplasm"/>
    <property type="evidence" value="ECO:0000318"/>
    <property type="project" value="GO_Central"/>
</dbReference>
<dbReference type="GO" id="GO:0022627">
    <property type="term" value="C:cytosolic small ribosomal subunit"/>
    <property type="evidence" value="ECO:0000266"/>
    <property type="project" value="PomBase"/>
</dbReference>
<dbReference type="GO" id="GO:0005730">
    <property type="term" value="C:nucleolus"/>
    <property type="evidence" value="ECO:0007005"/>
    <property type="project" value="PomBase"/>
</dbReference>
<dbReference type="GO" id="GO:0005634">
    <property type="term" value="C:nucleus"/>
    <property type="evidence" value="ECO:0000318"/>
    <property type="project" value="GO_Central"/>
</dbReference>
<dbReference type="GO" id="GO:0031386">
    <property type="term" value="F:protein tag activity"/>
    <property type="evidence" value="ECO:0000318"/>
    <property type="project" value="GO_Central"/>
</dbReference>
<dbReference type="GO" id="GO:0003735">
    <property type="term" value="F:structural constituent of ribosome"/>
    <property type="evidence" value="ECO:0007669"/>
    <property type="project" value="InterPro"/>
</dbReference>
<dbReference type="GO" id="GO:0031625">
    <property type="term" value="F:ubiquitin protein ligase binding"/>
    <property type="evidence" value="ECO:0000318"/>
    <property type="project" value="GO_Central"/>
</dbReference>
<dbReference type="GO" id="GO:0008270">
    <property type="term" value="F:zinc ion binding"/>
    <property type="evidence" value="ECO:0007669"/>
    <property type="project" value="UniProtKB-KW"/>
</dbReference>
<dbReference type="GO" id="GO:0002181">
    <property type="term" value="P:cytoplasmic translation"/>
    <property type="evidence" value="ECO:0000266"/>
    <property type="project" value="PomBase"/>
</dbReference>
<dbReference type="GO" id="GO:0019941">
    <property type="term" value="P:modification-dependent protein catabolic process"/>
    <property type="evidence" value="ECO:0000318"/>
    <property type="project" value="GO_Central"/>
</dbReference>
<dbReference type="GO" id="GO:0016567">
    <property type="term" value="P:protein ubiquitination"/>
    <property type="evidence" value="ECO:0000318"/>
    <property type="project" value="GO_Central"/>
</dbReference>
<dbReference type="GO" id="GO:0042254">
    <property type="term" value="P:ribosome biogenesis"/>
    <property type="evidence" value="ECO:0000266"/>
    <property type="project" value="PomBase"/>
</dbReference>
<dbReference type="CDD" id="cd01803">
    <property type="entry name" value="Ubl_ubiquitin"/>
    <property type="match status" value="1"/>
</dbReference>
<dbReference type="FunFam" id="3.10.20.90:FF:000008">
    <property type="entry name" value="Ubiquitin-40S ribosomal protein S27a"/>
    <property type="match status" value="1"/>
</dbReference>
<dbReference type="Gene3D" id="6.20.50.150">
    <property type="match status" value="1"/>
</dbReference>
<dbReference type="Gene3D" id="3.10.20.90">
    <property type="entry name" value="Phosphatidylinositol 3-kinase Catalytic Subunit, Chain A, domain 1"/>
    <property type="match status" value="1"/>
</dbReference>
<dbReference type="InterPro" id="IPR002906">
    <property type="entry name" value="Ribosomal_eS31"/>
</dbReference>
<dbReference type="InterPro" id="IPR038582">
    <property type="entry name" value="Ribosomal_eS31_euk-type_sf"/>
</dbReference>
<dbReference type="InterPro" id="IPR011332">
    <property type="entry name" value="Ribosomal_zn-bd"/>
</dbReference>
<dbReference type="InterPro" id="IPR000626">
    <property type="entry name" value="Ubiquitin-like_dom"/>
</dbReference>
<dbReference type="InterPro" id="IPR029071">
    <property type="entry name" value="Ubiquitin-like_domsf"/>
</dbReference>
<dbReference type="InterPro" id="IPR019954">
    <property type="entry name" value="Ubiquitin_CS"/>
</dbReference>
<dbReference type="InterPro" id="IPR019956">
    <property type="entry name" value="Ubiquitin_dom"/>
</dbReference>
<dbReference type="InterPro" id="IPR050158">
    <property type="entry name" value="Ubiquitin_ubiquitin-like"/>
</dbReference>
<dbReference type="NCBIfam" id="NF001669">
    <property type="entry name" value="PRK00432.1"/>
    <property type="match status" value="1"/>
</dbReference>
<dbReference type="PANTHER" id="PTHR10666">
    <property type="entry name" value="UBIQUITIN"/>
    <property type="match status" value="1"/>
</dbReference>
<dbReference type="Pfam" id="PF01599">
    <property type="entry name" value="Ribosomal_S27"/>
    <property type="match status" value="1"/>
</dbReference>
<dbReference type="Pfam" id="PF00240">
    <property type="entry name" value="ubiquitin"/>
    <property type="match status" value="1"/>
</dbReference>
<dbReference type="PRINTS" id="PR00348">
    <property type="entry name" value="UBIQUITIN"/>
</dbReference>
<dbReference type="SMART" id="SM01402">
    <property type="entry name" value="Ribosomal_S27"/>
    <property type="match status" value="1"/>
</dbReference>
<dbReference type="SMART" id="SM00213">
    <property type="entry name" value="UBQ"/>
    <property type="match status" value="1"/>
</dbReference>
<dbReference type="SUPFAM" id="SSF54236">
    <property type="entry name" value="Ubiquitin-like"/>
    <property type="match status" value="1"/>
</dbReference>
<dbReference type="SUPFAM" id="SSF57829">
    <property type="entry name" value="Zn-binding ribosomal proteins"/>
    <property type="match status" value="1"/>
</dbReference>
<dbReference type="PROSITE" id="PS00299">
    <property type="entry name" value="UBIQUITIN_1"/>
    <property type="match status" value="1"/>
</dbReference>
<dbReference type="PROSITE" id="PS50053">
    <property type="entry name" value="UBIQUITIN_2"/>
    <property type="match status" value="1"/>
</dbReference>